<dbReference type="EMBL" id="BC095201">
    <property type="protein sequence ID" value="AAH95201.1"/>
    <property type="molecule type" value="mRNA"/>
</dbReference>
<dbReference type="RefSeq" id="NP_001018410.1">
    <property type="nucleotide sequence ID" value="NM_001020574.1"/>
</dbReference>
<dbReference type="SMR" id="Q503S6"/>
<dbReference type="FunCoup" id="Q503S6">
    <property type="interactions" value="1809"/>
</dbReference>
<dbReference type="STRING" id="7955.ENSDARP00000116826"/>
<dbReference type="PaxDb" id="7955-ENSDARP00000116826"/>
<dbReference type="PeptideAtlas" id="Q503S6"/>
<dbReference type="GeneID" id="553597"/>
<dbReference type="KEGG" id="dre:553597"/>
<dbReference type="AGR" id="ZFIN:ZDB-GENE-050522-345"/>
<dbReference type="CTD" id="8649"/>
<dbReference type="ZFIN" id="ZDB-GENE-050522-345">
    <property type="gene designation" value="lamtor3"/>
</dbReference>
<dbReference type="eggNOG" id="ENOG502RYGZ">
    <property type="taxonomic scope" value="Eukaryota"/>
</dbReference>
<dbReference type="InParanoid" id="Q503S6"/>
<dbReference type="OrthoDB" id="343907at2759"/>
<dbReference type="Reactome" id="R-DRE-1632852">
    <property type="pathway name" value="Macroautophagy"/>
</dbReference>
<dbReference type="Reactome" id="R-DRE-165159">
    <property type="pathway name" value="MTOR signalling"/>
</dbReference>
<dbReference type="Reactome" id="R-DRE-166208">
    <property type="pathway name" value="mTORC1-mediated signalling"/>
</dbReference>
<dbReference type="Reactome" id="R-DRE-380972">
    <property type="pathway name" value="Energy dependent regulation of mTOR by LKB1-AMPK"/>
</dbReference>
<dbReference type="Reactome" id="R-DRE-5628897">
    <property type="pathway name" value="TP53 Regulates Metabolic Genes"/>
</dbReference>
<dbReference type="Reactome" id="R-DRE-5674135">
    <property type="pathway name" value="MAP2K and MAPK activation"/>
</dbReference>
<dbReference type="Reactome" id="R-DRE-6798695">
    <property type="pathway name" value="Neutrophil degranulation"/>
</dbReference>
<dbReference type="Reactome" id="R-DRE-8943724">
    <property type="pathway name" value="Regulation of PTEN gene transcription"/>
</dbReference>
<dbReference type="Reactome" id="R-DRE-9639288">
    <property type="pathway name" value="Amino acids regulate mTORC1"/>
</dbReference>
<dbReference type="PRO" id="PR:Q503S6"/>
<dbReference type="Proteomes" id="UP000000437">
    <property type="component" value="Chromosome 13"/>
</dbReference>
<dbReference type="GO" id="GO:0031902">
    <property type="term" value="C:late endosome membrane"/>
    <property type="evidence" value="ECO:0007669"/>
    <property type="project" value="UniProtKB-SubCell"/>
</dbReference>
<dbReference type="GO" id="GO:0005765">
    <property type="term" value="C:lysosomal membrane"/>
    <property type="evidence" value="ECO:0000250"/>
    <property type="project" value="UniProtKB"/>
</dbReference>
<dbReference type="GO" id="GO:0071986">
    <property type="term" value="C:Ragulator complex"/>
    <property type="evidence" value="ECO:0000250"/>
    <property type="project" value="UniProtKB"/>
</dbReference>
<dbReference type="GO" id="GO:0071230">
    <property type="term" value="P:cellular response to amino acid stimulus"/>
    <property type="evidence" value="ECO:0000250"/>
    <property type="project" value="UniProtKB"/>
</dbReference>
<dbReference type="GO" id="GO:0032008">
    <property type="term" value="P:positive regulation of TOR signaling"/>
    <property type="evidence" value="ECO:0000250"/>
    <property type="project" value="UniProtKB"/>
</dbReference>
<dbReference type="GO" id="GO:1904263">
    <property type="term" value="P:positive regulation of TORC1 signaling"/>
    <property type="evidence" value="ECO:0000250"/>
    <property type="project" value="UniProtKB"/>
</dbReference>
<dbReference type="GO" id="GO:0008104">
    <property type="term" value="P:protein localization"/>
    <property type="evidence" value="ECO:0000250"/>
    <property type="project" value="UniProtKB"/>
</dbReference>
<dbReference type="FunFam" id="3.30.450.30:FF:000003">
    <property type="entry name" value="ragulator complex protein LAMTOR3 homolog"/>
    <property type="match status" value="1"/>
</dbReference>
<dbReference type="Gene3D" id="3.30.450.30">
    <property type="entry name" value="Dynein light chain 2a, cytoplasmic"/>
    <property type="match status" value="1"/>
</dbReference>
<dbReference type="InterPro" id="IPR015019">
    <property type="entry name" value="LAMTOR3"/>
</dbReference>
<dbReference type="PANTHER" id="PTHR13378:SF1">
    <property type="entry name" value="RAGULATOR COMPLEX PROTEIN LAMTOR3"/>
    <property type="match status" value="1"/>
</dbReference>
<dbReference type="PANTHER" id="PTHR13378">
    <property type="entry name" value="REGULATOR COMPLEX PROTEIN LAMTOR3"/>
    <property type="match status" value="1"/>
</dbReference>
<dbReference type="Pfam" id="PF08923">
    <property type="entry name" value="MAPKK1_Int"/>
    <property type="match status" value="1"/>
</dbReference>
<dbReference type="SMART" id="SM01278">
    <property type="entry name" value="MAPKK1_Int"/>
    <property type="match status" value="1"/>
</dbReference>
<dbReference type="SUPFAM" id="SSF103196">
    <property type="entry name" value="Roadblock/LC7 domain"/>
    <property type="match status" value="1"/>
</dbReference>
<feature type="chain" id="PRO_0000356162" description="Ragulator complex protein LAMTOR3">
    <location>
        <begin position="1"/>
        <end position="124"/>
    </location>
</feature>
<keyword id="KW-0967">Endosome</keyword>
<keyword id="KW-0472">Membrane</keyword>
<keyword id="KW-1185">Reference proteome</keyword>
<accession>Q503S6</accession>
<name>LTOR3_DANRE</name>
<protein>
    <recommendedName>
        <fullName>Ragulator complex protein LAMTOR3</fullName>
    </recommendedName>
    <alternativeName>
        <fullName>Late endosomal/lysosomal adaptor and MAPK and MTOR activator 3</fullName>
    </alternativeName>
    <alternativeName>
        <fullName>Mitogen-activated protein kinase scaffold protein 1</fullName>
    </alternativeName>
</protein>
<comment type="function">
    <text evidence="2">As part of the Ragulator complex it is involved in amino acid sensing and activation of mTORC1, a signaling complex promoting cell growth in response to growth factors, energy levels, and amino acids. Activated by amino acids through a mechanism involving the lysosomal V-ATPase, the Ragulator plays a dual role for the small GTPases Rag (RagA/RRAGA, RagB/RRAGB, RagC/RRAGC and/or RagD/RRAGD): it (1) acts as a guanine nucleotide exchange factor (GEF), activating the small GTPases Rag and (2) mediates recruitment of Rag GTPases to the lysosome membrane. Activated Ragulator and Rag GTPases function as a scaffold recruiting mTORC1 to lysosomes where it is in turn activated.</text>
</comment>
<comment type="subunit">
    <text evidence="1 2">Part of the Ragulator complex composed of lamtor1, lamtor2, lamtor3, lamtor4 and lamtor5. The Ragulator complex interacts with slc38a9; the probable amino acid sensor. Component of the lysosomal folliculin complex (LFC).</text>
</comment>
<comment type="subcellular location">
    <subcellularLocation>
        <location evidence="1">Late endosome membrane</location>
        <topology evidence="1">Peripheral membrane protein</topology>
        <orientation evidence="1">Cytoplasmic side</orientation>
    </subcellularLocation>
    <text evidence="1">Recruited to lysosome and endosome membranes by LAMTOR1.</text>
</comment>
<comment type="similarity">
    <text evidence="3">Belongs to the LAMTOR3 family.</text>
</comment>
<reference key="1">
    <citation type="submission" date="2005-05" db="EMBL/GenBank/DDBJ databases">
        <authorList>
            <consortium name="NIH - Zebrafish Gene Collection (ZGC) project"/>
        </authorList>
    </citation>
    <scope>NUCLEOTIDE SEQUENCE [LARGE SCALE MRNA]</scope>
    <source>
        <tissue>Brain</tissue>
    </source>
</reference>
<sequence length="124" mass="13677">MADNLRSYLYKQLPSVEGLHAIVVTDRDGAPVIKVANDNAPEYALRPAFLSTFALATDQGSKLGLSKNKSIICYYSTYQIVQFNRLPLVISFIASSNANTGLIFSLEKELVPLIEELRQVVEVA</sequence>
<gene>
    <name type="primary">lamtor3</name>
    <name type="synonym">mapksp1</name>
    <name type="ORF">zgc:110207</name>
</gene>
<organism>
    <name type="scientific">Danio rerio</name>
    <name type="common">Zebrafish</name>
    <name type="synonym">Brachydanio rerio</name>
    <dbReference type="NCBI Taxonomy" id="7955"/>
    <lineage>
        <taxon>Eukaryota</taxon>
        <taxon>Metazoa</taxon>
        <taxon>Chordata</taxon>
        <taxon>Craniata</taxon>
        <taxon>Vertebrata</taxon>
        <taxon>Euteleostomi</taxon>
        <taxon>Actinopterygii</taxon>
        <taxon>Neopterygii</taxon>
        <taxon>Teleostei</taxon>
        <taxon>Ostariophysi</taxon>
        <taxon>Cypriniformes</taxon>
        <taxon>Danionidae</taxon>
        <taxon>Danioninae</taxon>
        <taxon>Danio</taxon>
    </lineage>
</organism>
<evidence type="ECO:0000250" key="1">
    <source>
        <dbReference type="UniProtKB" id="O88653"/>
    </source>
</evidence>
<evidence type="ECO:0000250" key="2">
    <source>
        <dbReference type="UniProtKB" id="Q9UHA4"/>
    </source>
</evidence>
<evidence type="ECO:0000305" key="3"/>
<proteinExistence type="evidence at transcript level"/>